<proteinExistence type="evidence at protein level"/>
<protein>
    <recommendedName>
        <fullName evidence="4">Lim and transglutaminase domain protein ltd-1</fullName>
    </recommendedName>
    <alternativeName>
        <fullName evidence="4">Kyphoscoliosis inactive peptidase homolog ltd-1</fullName>
    </alternativeName>
</protein>
<comment type="function">
    <text evidence="4 5">Cytoskeleton-associated protein (Probable). May play a role in hypodermal cell development (Probable).</text>
</comment>
<comment type="subcellular location">
    <subcellularLocation>
        <location evidence="2">Cytoplasm</location>
        <location evidence="2">Cytoskeleton</location>
    </subcellularLocation>
</comment>
<comment type="alternative products">
    <event type="alternative splicing"/>
    <isoform>
        <id>G5EF51-1</id>
        <name evidence="8">a</name>
        <sequence type="displayed"/>
    </isoform>
    <isoform>
        <id>G5EF51-2</id>
        <name evidence="9">b</name>
        <sequence type="described" ref="VSP_061191"/>
    </isoform>
</comment>
<comment type="tissue specificity">
    <text evidence="2">Expressed in the Y and U rectal epithelial cells, in marginal cells of the terminal bulb and isthmus of the pharynx (at protein level).</text>
</comment>
<comment type="developmental stage">
    <text evidence="2">Expressed throughout development (at protein level). First expressed in two-fold stage embryos (at protein level) (PubMed:12204272). During embryogenesis, expressed in the apical regions of the dorsal and ventral hypodermis in tightly organized circumferential filament bundles (at protein level) (PubMed:12204272). Expressed in seam cells in embryos and at the larval stages (at protein level) (PubMed:12204272). In L1 stage larvae, expressed in the apical junction between hypodermal cells hyp 5, hyp 6 and hyp 7, and between the seam cells and the P blast cells in the ventral midline (at protein level) (PubMed:12204272). In L2 stage larvae, expressed in the Y and U rectal epithelial cells (at protein level) (PubMed:12204272). In L3 stage larvae, expressed in the pharynx, socket cells, the processes that link socket cells to the amphid, in marginal cells of the terminal bulb and at the junction between the pharynx lumen and the hypodermis (at protein level) (PubMed:12204272). In L4 stage larvae, expressed in longitudinal filaments within the cytoplasm linking both extremities of the elongating seam cells and in the alae formed by their fusion (at protein level) (PubMed:12204272).</text>
</comment>
<comment type="similarity">
    <text evidence="4">Belongs to the transglutaminase-like superfamily.</text>
</comment>
<comment type="caution">
    <text evidence="4">Unlike the mammalian homolog KY, the residues forming the catalytic triad in the putative transglutaminase-like domain of ltd-1 are not conserved, therefore it is likely that the protein lacks protease activity.</text>
</comment>
<organism evidence="7">
    <name type="scientific">Caenorhabditis elegans</name>
    <dbReference type="NCBI Taxonomy" id="6239"/>
    <lineage>
        <taxon>Eukaryota</taxon>
        <taxon>Metazoa</taxon>
        <taxon>Ecdysozoa</taxon>
        <taxon>Nematoda</taxon>
        <taxon>Chromadorea</taxon>
        <taxon>Rhabditida</taxon>
        <taxon>Rhabditina</taxon>
        <taxon>Rhabditomorpha</taxon>
        <taxon>Rhabditoidea</taxon>
        <taxon>Rhabditidae</taxon>
        <taxon>Peloderinae</taxon>
        <taxon>Caenorhabditis</taxon>
    </lineage>
</organism>
<dbReference type="EMBL" id="AF489839">
    <property type="protein sequence ID" value="AAN09795.1"/>
    <property type="molecule type" value="mRNA"/>
</dbReference>
<dbReference type="EMBL" id="BX284602">
    <property type="protein sequence ID" value="CAA87787.2"/>
    <property type="molecule type" value="Genomic_DNA"/>
</dbReference>
<dbReference type="EMBL" id="BX284602">
    <property type="protein sequence ID" value="CZR14489.1"/>
    <property type="molecule type" value="Genomic_DNA"/>
</dbReference>
<dbReference type="PIR" id="T23237">
    <property type="entry name" value="T23237"/>
</dbReference>
<dbReference type="RefSeq" id="NP_001309573.1">
    <molecule id="G5EF51-2"/>
    <property type="nucleotide sequence ID" value="NM_001322746.3"/>
</dbReference>
<dbReference type="RefSeq" id="NP_495697.2">
    <molecule id="G5EF51-1"/>
    <property type="nucleotide sequence ID" value="NM_063296.3"/>
</dbReference>
<dbReference type="SMR" id="G5EF51"/>
<dbReference type="FunCoup" id="G5EF51">
    <property type="interactions" value="674"/>
</dbReference>
<dbReference type="STRING" id="6239.K02C4.4a.1"/>
<dbReference type="PaxDb" id="6239-K02C4.4"/>
<dbReference type="PeptideAtlas" id="G5EF51"/>
<dbReference type="EnsemblMetazoa" id="K02C4.4a.1">
    <molecule id="G5EF51-1"/>
    <property type="protein sequence ID" value="K02C4.4a.1"/>
    <property type="gene ID" value="WBGene00003089"/>
</dbReference>
<dbReference type="EnsemblMetazoa" id="K02C4.4b.1">
    <molecule id="G5EF51-2"/>
    <property type="protein sequence ID" value="K02C4.4b.1"/>
    <property type="gene ID" value="WBGene00003089"/>
</dbReference>
<dbReference type="GeneID" id="174301"/>
<dbReference type="KEGG" id="cel:CELE_K02C4.4"/>
<dbReference type="AGR" id="WB:WBGene00003089"/>
<dbReference type="CTD" id="174301"/>
<dbReference type="WormBase" id="K02C4.4a">
    <molecule id="G5EF51-1"/>
    <property type="protein sequence ID" value="CE32687"/>
    <property type="gene ID" value="WBGene00003089"/>
    <property type="gene designation" value="ltd-1"/>
</dbReference>
<dbReference type="WormBase" id="K02C4.4b">
    <molecule id="G5EF51-2"/>
    <property type="protein sequence ID" value="CE51496"/>
    <property type="gene ID" value="WBGene00003089"/>
    <property type="gene designation" value="ltd-1"/>
</dbReference>
<dbReference type="eggNOG" id="KOG1700">
    <property type="taxonomic scope" value="Eukaryota"/>
</dbReference>
<dbReference type="eggNOG" id="KOG4575">
    <property type="taxonomic scope" value="Eukaryota"/>
</dbReference>
<dbReference type="GeneTree" id="ENSGT00940000172737"/>
<dbReference type="HOGENOM" id="CLU_009339_1_0_1"/>
<dbReference type="InParanoid" id="G5EF51"/>
<dbReference type="OMA" id="NEFQDEW"/>
<dbReference type="OrthoDB" id="6129702at2759"/>
<dbReference type="PhylomeDB" id="G5EF51"/>
<dbReference type="PRO" id="PR:G5EF51"/>
<dbReference type="Proteomes" id="UP000001940">
    <property type="component" value="Chromosome II"/>
</dbReference>
<dbReference type="Bgee" id="WBGene00003089">
    <property type="expression patterns" value="Expressed in pharyngeal muscle cell (C elegans) and 3 other cell types or tissues"/>
</dbReference>
<dbReference type="ExpressionAtlas" id="G5EF51">
    <property type="expression patterns" value="baseline and differential"/>
</dbReference>
<dbReference type="GO" id="GO:0005911">
    <property type="term" value="C:cell-cell junction"/>
    <property type="evidence" value="ECO:0000314"/>
    <property type="project" value="WormBase"/>
</dbReference>
<dbReference type="GO" id="GO:0005737">
    <property type="term" value="C:cytoplasm"/>
    <property type="evidence" value="ECO:0000314"/>
    <property type="project" value="WormBase"/>
</dbReference>
<dbReference type="GO" id="GO:0005856">
    <property type="term" value="C:cytoskeleton"/>
    <property type="evidence" value="ECO:0007669"/>
    <property type="project" value="UniProtKB-SubCell"/>
</dbReference>
<dbReference type="GO" id="GO:0055120">
    <property type="term" value="C:striated muscle dense body"/>
    <property type="evidence" value="ECO:0007005"/>
    <property type="project" value="WormBase"/>
</dbReference>
<dbReference type="GO" id="GO:0046872">
    <property type="term" value="F:metal ion binding"/>
    <property type="evidence" value="ECO:0007669"/>
    <property type="project" value="UniProtKB-KW"/>
</dbReference>
<dbReference type="GO" id="GO:0061061">
    <property type="term" value="P:muscle structure development"/>
    <property type="evidence" value="ECO:0000250"/>
    <property type="project" value="WormBase"/>
</dbReference>
<dbReference type="CDD" id="cd09443">
    <property type="entry name" value="LIM_Ltd-1"/>
    <property type="match status" value="1"/>
</dbReference>
<dbReference type="FunFam" id="2.10.110.10:FF:000108">
    <property type="entry name" value="LIM domain containing protein"/>
    <property type="match status" value="1"/>
</dbReference>
<dbReference type="Gene3D" id="2.10.110.10">
    <property type="entry name" value="Cysteine Rich Protein"/>
    <property type="match status" value="1"/>
</dbReference>
<dbReference type="InterPro" id="IPR056564">
    <property type="entry name" value="Ig-like_KY"/>
</dbReference>
<dbReference type="InterPro" id="IPR038765">
    <property type="entry name" value="Papain-like_cys_pep_sf"/>
</dbReference>
<dbReference type="InterPro" id="IPR053041">
    <property type="entry name" value="Transglut-like_Superfamily_Mod"/>
</dbReference>
<dbReference type="InterPro" id="IPR002931">
    <property type="entry name" value="Transglutaminase-like"/>
</dbReference>
<dbReference type="InterPro" id="IPR001781">
    <property type="entry name" value="Znf_LIM"/>
</dbReference>
<dbReference type="PANTHER" id="PTHR47020">
    <property type="entry name" value="HILLARIN"/>
    <property type="match status" value="1"/>
</dbReference>
<dbReference type="PANTHER" id="PTHR47020:SF1">
    <property type="entry name" value="HILLARIN"/>
    <property type="match status" value="1"/>
</dbReference>
<dbReference type="Pfam" id="PF23265">
    <property type="entry name" value="Ig-like_KY"/>
    <property type="match status" value="2"/>
</dbReference>
<dbReference type="Pfam" id="PF00412">
    <property type="entry name" value="LIM"/>
    <property type="match status" value="1"/>
</dbReference>
<dbReference type="SMART" id="SM00132">
    <property type="entry name" value="LIM"/>
    <property type="match status" value="1"/>
</dbReference>
<dbReference type="SMART" id="SM00460">
    <property type="entry name" value="TGc"/>
    <property type="match status" value="1"/>
</dbReference>
<dbReference type="SUPFAM" id="SSF54001">
    <property type="entry name" value="Cysteine proteinases"/>
    <property type="match status" value="1"/>
</dbReference>
<dbReference type="PROSITE" id="PS00478">
    <property type="entry name" value="LIM_DOMAIN_1"/>
    <property type="match status" value="1"/>
</dbReference>
<dbReference type="PROSITE" id="PS50023">
    <property type="entry name" value="LIM_DOMAIN_2"/>
    <property type="match status" value="1"/>
</dbReference>
<name>KY_CAEEL</name>
<reference evidence="6" key="1">
    <citation type="journal article" date="2002" name="Mech. Dev.">
        <title>Cloning and developmental expression analysis of ltd-1, the Caenorhabditis elegans homologue of the mouse kyphoscoliosis (ky) gene.</title>
        <authorList>
            <person name="Vargas J.D."/>
            <person name="Culetto E."/>
            <person name="Ponting C.P."/>
            <person name="Miguel-Aliaga I."/>
            <person name="Davies K.E."/>
            <person name="Sattelle D.B."/>
        </authorList>
    </citation>
    <scope>NUCLEOTIDE SEQUENCE [MRNA]</scope>
    <scope>FUNCTION</scope>
    <scope>SUBCELLULAR LOCATION</scope>
    <scope>TISSUE SPECIFICITY</scope>
    <scope>DEVELOPMENTAL STAGE</scope>
    <source>
        <strain evidence="6">Bristol N2</strain>
    </source>
</reference>
<reference evidence="7" key="2">
    <citation type="journal article" date="1998" name="Science">
        <title>Genome sequence of the nematode C. elegans: a platform for investigating biology.</title>
        <authorList>
            <consortium name="The C. elegans sequencing consortium"/>
        </authorList>
    </citation>
    <scope>NUCLEOTIDE SEQUENCE [LARGE SCALE GENOMIC DNA]</scope>
    <source>
        <strain evidence="7">Bristol N2</strain>
    </source>
</reference>
<keyword id="KW-0025">Alternative splicing</keyword>
<keyword id="KW-0963">Cytoplasm</keyword>
<keyword id="KW-0206">Cytoskeleton</keyword>
<keyword id="KW-0440">LIM domain</keyword>
<keyword id="KW-0479">Metal-binding</keyword>
<keyword id="KW-1185">Reference proteome</keyword>
<keyword id="KW-0862">Zinc</keyword>
<feature type="chain" id="PRO_0000453730" description="Lim and transglutaminase domain protein ltd-1">
    <location>
        <begin position="1"/>
        <end position="723"/>
    </location>
</feature>
<feature type="domain" description="LIM zinc-binding" evidence="1">
    <location>
        <begin position="5"/>
        <end position="72"/>
    </location>
</feature>
<feature type="splice variant" id="VSP_061191" description="In isoform b." evidence="4">
    <location>
        <begin position="1"/>
        <end position="234"/>
    </location>
</feature>
<accession>G5EF51</accession>
<accession>A0A131MD24</accession>
<sequence length="723" mass="83080">MNSKQHCNRCGKQVYPTDKVGPLKDSTFFHQGCFKCYICGTRLALKTYCNNRNDINDKEVYCSNHVPIAGPHDLPMASTNGSGKNLENNNHVKNGNWIDAGLSDMKIAHAMKATQVARPYPKISHEGAKYVVDYDTQTRLELLHRKDEDDLYESFQDKRVREAEEFEKENTEEWEKALAEFAKKYEKGQSNMKKDDLIRQLTIKREKKLETLHTKRKERERHQTAELVDRQAKEMLELFKASRSEYSNLQYPSTPPPPVPPSCSKREIYTTTDYFSSIDEVAIHCARNEVASFTDLIRTLSSGARSDVDVARAIYRWITIKNLNTMIFDDSIQNDTPMGLLRGIKYGTESYHVLFKRLCSYAGLHCVVIKGFSKSAGYQPGYSFDDHRFRNTWNAVFLDGSWRFVQCNWGARHLVNAKDGSHEAKTDGNLRYEYDDHYFMTDSEEFIYEFFPSDHAWQLLPRPLSLLQFERIPFVRSLFFKYNLSFIDNKLESTVYTDKSGAASISIRLPPKGDSLIFHYNLKFFDSEENTISGMSLKRFVMQSVTEDVVTFRVHAPSTRPLLLDIFANSVSSGAYLTGQPIKFKSVCKFKVVCESLQVIMVPLPECASGEWGPAKATRLFGLLPISHPDAIINTGRYVEIRFRMTRPLSEFVASLHRNRTDDRALQACTRSALKGDMVYIQIEFPGEGQYGLDIYTRQDDQLINGKQLLTHCCKYLIHSRNC</sequence>
<evidence type="ECO:0000255" key="1">
    <source>
        <dbReference type="PROSITE-ProRule" id="PRU00125"/>
    </source>
</evidence>
<evidence type="ECO:0000269" key="2">
    <source>
    </source>
</evidence>
<evidence type="ECO:0000303" key="3">
    <source>
    </source>
</evidence>
<evidence type="ECO:0000305" key="4"/>
<evidence type="ECO:0000305" key="5">
    <source>
    </source>
</evidence>
<evidence type="ECO:0000312" key="6">
    <source>
        <dbReference type="EMBL" id="AAN09795.1"/>
    </source>
</evidence>
<evidence type="ECO:0000312" key="7">
    <source>
        <dbReference type="Proteomes" id="UP000001940"/>
    </source>
</evidence>
<evidence type="ECO:0000312" key="8">
    <source>
        <dbReference type="WormBase" id="K02C4.4a"/>
    </source>
</evidence>
<evidence type="ECO:0000312" key="9">
    <source>
        <dbReference type="WormBase" id="K02C4.4b"/>
    </source>
</evidence>
<gene>
    <name evidence="3 8" type="primary">ltd-1</name>
    <name evidence="8" type="ORF">K02C4.4</name>
</gene>